<keyword id="KW-0963">Cytoplasm</keyword>
<keyword id="KW-0597">Phosphoprotein</keyword>
<keyword id="KW-0598">Phosphotransferase system</keyword>
<keyword id="KW-0762">Sugar transport</keyword>
<keyword id="KW-0804">Transcription</keyword>
<keyword id="KW-0805">Transcription regulation</keyword>
<keyword id="KW-0813">Transport</keyword>
<proteinExistence type="evidence at protein level"/>
<reference key="1">
    <citation type="journal article" date="2001" name="Lancet">
        <title>Whole genome sequencing of meticillin-resistant Staphylococcus aureus.</title>
        <authorList>
            <person name="Kuroda M."/>
            <person name="Ohta T."/>
            <person name="Uchiyama I."/>
            <person name="Baba T."/>
            <person name="Yuzawa H."/>
            <person name="Kobayashi I."/>
            <person name="Cui L."/>
            <person name="Oguchi A."/>
            <person name="Aoki K."/>
            <person name="Nagai Y."/>
            <person name="Lian J.-Q."/>
            <person name="Ito T."/>
            <person name="Kanamori M."/>
            <person name="Matsumaru H."/>
            <person name="Maruyama A."/>
            <person name="Murakami H."/>
            <person name="Hosoyama A."/>
            <person name="Mizutani-Ui Y."/>
            <person name="Takahashi N.K."/>
            <person name="Sawano T."/>
            <person name="Inoue R."/>
            <person name="Kaito C."/>
            <person name="Sekimizu K."/>
            <person name="Hirakawa H."/>
            <person name="Kuhara S."/>
            <person name="Goto S."/>
            <person name="Yabuzaki J."/>
            <person name="Kanehisa M."/>
            <person name="Yamashita A."/>
            <person name="Oshima K."/>
            <person name="Furuya K."/>
            <person name="Yoshino C."/>
            <person name="Shiba T."/>
            <person name="Hattori M."/>
            <person name="Ogasawara N."/>
            <person name="Hayashi H."/>
            <person name="Hiramatsu K."/>
        </authorList>
    </citation>
    <scope>NUCLEOTIDE SEQUENCE [LARGE SCALE GENOMIC DNA]</scope>
    <source>
        <strain>N315</strain>
    </source>
</reference>
<reference key="2">
    <citation type="journal article" date="2005" name="J. Microbiol. Methods">
        <title>Correlation of proteomic and transcriptomic profiles of Staphylococcus aureus during the post-exponential phase of growth.</title>
        <authorList>
            <person name="Scherl A."/>
            <person name="Francois P."/>
            <person name="Bento M."/>
            <person name="Deshusses J.M."/>
            <person name="Charbonnier Y."/>
            <person name="Converset V."/>
            <person name="Huyghe A."/>
            <person name="Walter N."/>
            <person name="Hoogland C."/>
            <person name="Appel R.D."/>
            <person name="Sanchez J.-C."/>
            <person name="Zimmermann-Ivol C.G."/>
            <person name="Corthals G.L."/>
            <person name="Hochstrasser D.F."/>
            <person name="Schrenzel J."/>
        </authorList>
    </citation>
    <scope>IDENTIFICATION BY MASS SPECTROMETRY</scope>
    <source>
        <strain>N315</strain>
    </source>
</reference>
<reference key="3">
    <citation type="submission" date="2007-10" db="UniProtKB">
        <title>Shotgun proteomic analysis of total and membrane protein extracts of S. aureus strain N315.</title>
        <authorList>
            <person name="Vaezzadeh A.R."/>
            <person name="Deshusses J."/>
            <person name="Lescuyer P."/>
            <person name="Hochstrasser D.F."/>
        </authorList>
    </citation>
    <scope>IDENTIFICATION BY MASS SPECTROMETRY [LARGE SCALE ANALYSIS]</scope>
    <source>
        <strain>N315</strain>
    </source>
</reference>
<sequence length="88" mass="9496">MEQNSYVIIDETGIHARPATMLVQTASKFDSDIQLEYNGKKVNLKSIMGVMSLGVGKDAEITIYADGSDESDAIQAISDVLSKEGLTK</sequence>
<organism>
    <name type="scientific">Staphylococcus aureus (strain N315)</name>
    <dbReference type="NCBI Taxonomy" id="158879"/>
    <lineage>
        <taxon>Bacteria</taxon>
        <taxon>Bacillati</taxon>
        <taxon>Bacillota</taxon>
        <taxon>Bacilli</taxon>
        <taxon>Bacillales</taxon>
        <taxon>Staphylococcaceae</taxon>
        <taxon>Staphylococcus</taxon>
    </lineage>
</organism>
<protein>
    <recommendedName>
        <fullName>Phosphocarrier protein HPr</fullName>
    </recommendedName>
    <alternativeName>
        <fullName>Histidine-containing protein</fullName>
    </alternativeName>
</protein>
<name>PTHP_STAAN</name>
<gene>
    <name type="primary">ptsH</name>
    <name type="ordered locus">SA0934</name>
</gene>
<feature type="chain" id="PRO_0000107874" description="Phosphocarrier protein HPr">
    <location>
        <begin position="1"/>
        <end position="88"/>
    </location>
</feature>
<feature type="domain" description="HPr" evidence="2">
    <location>
        <begin position="1"/>
        <end position="88"/>
    </location>
</feature>
<feature type="active site" description="Pros-phosphohistidine intermediate" evidence="2">
    <location>
        <position position="15"/>
    </location>
</feature>
<feature type="modified residue" description="Phosphoserine; by HPrK/P" evidence="2">
    <location>
        <position position="46"/>
    </location>
</feature>
<evidence type="ECO:0000250" key="1"/>
<evidence type="ECO:0000255" key="2">
    <source>
        <dbReference type="PROSITE-ProRule" id="PRU00681"/>
    </source>
</evidence>
<evidence type="ECO:0000305" key="3"/>
<dbReference type="EMBL" id="BA000018">
    <property type="protein sequence ID" value="BAB42180.1"/>
    <property type="molecule type" value="Genomic_DNA"/>
</dbReference>
<dbReference type="PIR" id="A89878">
    <property type="entry name" value="A89878"/>
</dbReference>
<dbReference type="RefSeq" id="WP_000437472.1">
    <property type="nucleotide sequence ID" value="NC_002745.2"/>
</dbReference>
<dbReference type="BMRB" id="P99143"/>
<dbReference type="SMR" id="P99143"/>
<dbReference type="EnsemblBacteria" id="BAB42180">
    <property type="protein sequence ID" value="BAB42180"/>
    <property type="gene ID" value="BAB42180"/>
</dbReference>
<dbReference type="KEGG" id="sau:SA0934"/>
<dbReference type="HOGENOM" id="CLU_136230_2_2_9"/>
<dbReference type="PHI-base" id="PHI:11269"/>
<dbReference type="GO" id="GO:0005737">
    <property type="term" value="C:cytoplasm"/>
    <property type="evidence" value="ECO:0007669"/>
    <property type="project" value="UniProtKB-SubCell"/>
</dbReference>
<dbReference type="GO" id="GO:0009401">
    <property type="term" value="P:phosphoenolpyruvate-dependent sugar phosphotransferase system"/>
    <property type="evidence" value="ECO:0007669"/>
    <property type="project" value="UniProtKB-KW"/>
</dbReference>
<dbReference type="CDD" id="cd00367">
    <property type="entry name" value="PTS-HPr_like"/>
    <property type="match status" value="1"/>
</dbReference>
<dbReference type="Gene3D" id="3.30.1340.10">
    <property type="entry name" value="HPr-like"/>
    <property type="match status" value="1"/>
</dbReference>
<dbReference type="InterPro" id="IPR050399">
    <property type="entry name" value="HPr"/>
</dbReference>
<dbReference type="InterPro" id="IPR000032">
    <property type="entry name" value="HPr-like"/>
</dbReference>
<dbReference type="InterPro" id="IPR035895">
    <property type="entry name" value="HPr-like_sf"/>
</dbReference>
<dbReference type="InterPro" id="IPR001020">
    <property type="entry name" value="PTS_HPr_His_P_site"/>
</dbReference>
<dbReference type="InterPro" id="IPR002114">
    <property type="entry name" value="PTS_HPr_Ser_P_site"/>
</dbReference>
<dbReference type="NCBIfam" id="NF010352">
    <property type="entry name" value="PRK13780.1"/>
    <property type="match status" value="1"/>
</dbReference>
<dbReference type="NCBIfam" id="TIGR01003">
    <property type="entry name" value="PTS_HPr_family"/>
    <property type="match status" value="1"/>
</dbReference>
<dbReference type="PANTHER" id="PTHR33705">
    <property type="entry name" value="PHOSPHOCARRIER PROTEIN HPR"/>
    <property type="match status" value="1"/>
</dbReference>
<dbReference type="PANTHER" id="PTHR33705:SF2">
    <property type="entry name" value="PHOSPHOCARRIER PROTEIN NPR"/>
    <property type="match status" value="1"/>
</dbReference>
<dbReference type="Pfam" id="PF00381">
    <property type="entry name" value="PTS-HPr"/>
    <property type="match status" value="1"/>
</dbReference>
<dbReference type="PRINTS" id="PR00107">
    <property type="entry name" value="PHOSPHOCPHPR"/>
</dbReference>
<dbReference type="SUPFAM" id="SSF55594">
    <property type="entry name" value="HPr-like"/>
    <property type="match status" value="1"/>
</dbReference>
<dbReference type="PROSITE" id="PS51350">
    <property type="entry name" value="PTS_HPR_DOM"/>
    <property type="match status" value="1"/>
</dbReference>
<dbReference type="PROSITE" id="PS00369">
    <property type="entry name" value="PTS_HPR_HIS"/>
    <property type="match status" value="1"/>
</dbReference>
<dbReference type="PROSITE" id="PS00589">
    <property type="entry name" value="PTS_HPR_SER"/>
    <property type="match status" value="1"/>
</dbReference>
<accession>P99143</accession>
<accession>P02907</accession>
<comment type="function">
    <text evidence="1">General (non sugar-specific) component of the phosphoenolpyruvate-dependent sugar phosphotransferase system (sugar PTS). This major carbohydrate active-transport system catalyzes the phosphorylation of incoming sugar substrates concomitantly with their translocation across the cell membrane. The phosphoryl group from phosphoenolpyruvate (PEP) is transferred to the phosphoryl carrier protein HPr by enzyme I. Phospho-HPr then transfers it to the PTS EIIA domain.</text>
</comment>
<comment type="function">
    <text evidence="1">P-Ser-HPr interacts with the catabolite control protein A (CcpA), forming a complex that binds to DNA at the catabolite response elements cre, operator sites preceding a large number of catabolite-regulated genes. Thus, P-Ser-HPr is a corepressor in carbon catabolite repression (CCR), a mechanism that allows bacteria to coordinate and optimize the utilization of available carbon sources. P-Ser-HPr also plays a role in inducer exclusion, in which it probably interacts with several non-PTS permeases and inhibits their transport activity (By similarity).</text>
</comment>
<comment type="activity regulation">
    <text evidence="1">Phosphorylation on Ser-46 inhibits the phosphoryl transfer from enzyme I to HPr.</text>
</comment>
<comment type="subcellular location">
    <subcellularLocation>
        <location evidence="1">Cytoplasm</location>
    </subcellularLocation>
</comment>
<comment type="similarity">
    <text evidence="3">Belongs to the HPr family.</text>
</comment>